<name>FIS_ALISL</name>
<comment type="function">
    <text evidence="1">Activates ribosomal RNA transcription. Plays a direct role in upstream activation of rRNA promoters.</text>
</comment>
<comment type="subunit">
    <text evidence="1">Homodimer.</text>
</comment>
<comment type="similarity">
    <text evidence="1">Belongs to the transcriptional regulatory Fis family.</text>
</comment>
<evidence type="ECO:0000255" key="1">
    <source>
        <dbReference type="HAMAP-Rule" id="MF_00166"/>
    </source>
</evidence>
<accession>B6ENA5</accession>
<feature type="chain" id="PRO_1000097450" description="DNA-binding protein Fis">
    <location>
        <begin position="1"/>
        <end position="98"/>
    </location>
</feature>
<feature type="DNA-binding region" description="H-T-H motif" evidence="1">
    <location>
        <begin position="74"/>
        <end position="93"/>
    </location>
</feature>
<protein>
    <recommendedName>
        <fullName evidence="1">DNA-binding protein Fis</fullName>
    </recommendedName>
</protein>
<gene>
    <name evidence="1" type="primary">fis</name>
    <name type="ordered locus">VSAL_I2839</name>
</gene>
<keyword id="KW-0010">Activator</keyword>
<keyword id="KW-0238">DNA-binding</keyword>
<keyword id="KW-0804">Transcription</keyword>
<keyword id="KW-0805">Transcription regulation</keyword>
<sequence>MFDQSMTSEALTVTTVTAQDQITQKPLRDSVKASLKNYLGQLNGQEVNDLYELVLAEVEQPLLDMIMQHTRGNQTKAANMMGINRGTLRKKLKKYGMN</sequence>
<organism>
    <name type="scientific">Aliivibrio salmonicida (strain LFI1238)</name>
    <name type="common">Vibrio salmonicida (strain LFI1238)</name>
    <dbReference type="NCBI Taxonomy" id="316275"/>
    <lineage>
        <taxon>Bacteria</taxon>
        <taxon>Pseudomonadati</taxon>
        <taxon>Pseudomonadota</taxon>
        <taxon>Gammaproteobacteria</taxon>
        <taxon>Vibrionales</taxon>
        <taxon>Vibrionaceae</taxon>
        <taxon>Aliivibrio</taxon>
    </lineage>
</organism>
<dbReference type="EMBL" id="FM178379">
    <property type="protein sequence ID" value="CAQ80523.1"/>
    <property type="molecule type" value="Genomic_DNA"/>
</dbReference>
<dbReference type="RefSeq" id="WP_005421285.1">
    <property type="nucleotide sequence ID" value="NC_011312.1"/>
</dbReference>
<dbReference type="SMR" id="B6ENA5"/>
<dbReference type="GeneID" id="56276516"/>
<dbReference type="KEGG" id="vsa:VSAL_I2839"/>
<dbReference type="eggNOG" id="COG2901">
    <property type="taxonomic scope" value="Bacteria"/>
</dbReference>
<dbReference type="HOGENOM" id="CLU_158040_3_0_6"/>
<dbReference type="Proteomes" id="UP000001730">
    <property type="component" value="Chromosome 1"/>
</dbReference>
<dbReference type="GO" id="GO:0003700">
    <property type="term" value="F:DNA-binding transcription factor activity"/>
    <property type="evidence" value="ECO:0007669"/>
    <property type="project" value="UniProtKB-UniRule"/>
</dbReference>
<dbReference type="GO" id="GO:0043565">
    <property type="term" value="F:sequence-specific DNA binding"/>
    <property type="evidence" value="ECO:0007669"/>
    <property type="project" value="InterPro"/>
</dbReference>
<dbReference type="FunFam" id="1.10.10.60:FF:000006">
    <property type="entry name" value="DNA-binding protein Fis"/>
    <property type="match status" value="1"/>
</dbReference>
<dbReference type="Gene3D" id="1.10.10.60">
    <property type="entry name" value="Homeodomain-like"/>
    <property type="match status" value="1"/>
</dbReference>
<dbReference type="HAMAP" id="MF_00166">
    <property type="entry name" value="DNA_binding_Fis"/>
    <property type="match status" value="1"/>
</dbReference>
<dbReference type="InterPro" id="IPR005412">
    <property type="entry name" value="Fis_DNA-bd"/>
</dbReference>
<dbReference type="InterPro" id="IPR009057">
    <property type="entry name" value="Homeodomain-like_sf"/>
</dbReference>
<dbReference type="InterPro" id="IPR002197">
    <property type="entry name" value="HTH_Fis"/>
</dbReference>
<dbReference type="InterPro" id="IPR050207">
    <property type="entry name" value="Trans_regulatory_Fis"/>
</dbReference>
<dbReference type="NCBIfam" id="NF001659">
    <property type="entry name" value="PRK00430.1"/>
    <property type="match status" value="1"/>
</dbReference>
<dbReference type="PANTHER" id="PTHR47918">
    <property type="entry name" value="DNA-BINDING PROTEIN FIS"/>
    <property type="match status" value="1"/>
</dbReference>
<dbReference type="PANTHER" id="PTHR47918:SF1">
    <property type="entry name" value="DNA-BINDING PROTEIN FIS"/>
    <property type="match status" value="1"/>
</dbReference>
<dbReference type="Pfam" id="PF02954">
    <property type="entry name" value="HTH_8"/>
    <property type="match status" value="1"/>
</dbReference>
<dbReference type="PIRSF" id="PIRSF002097">
    <property type="entry name" value="DNA-binding_Fis"/>
    <property type="match status" value="1"/>
</dbReference>
<dbReference type="PRINTS" id="PR01591">
    <property type="entry name" value="DNABINDNGFIS"/>
</dbReference>
<dbReference type="PRINTS" id="PR01590">
    <property type="entry name" value="HTHFIS"/>
</dbReference>
<dbReference type="SUPFAM" id="SSF46689">
    <property type="entry name" value="Homeodomain-like"/>
    <property type="match status" value="1"/>
</dbReference>
<proteinExistence type="inferred from homology"/>
<reference key="1">
    <citation type="journal article" date="2008" name="BMC Genomics">
        <title>The genome sequence of the fish pathogen Aliivibrio salmonicida strain LFI1238 shows extensive evidence of gene decay.</title>
        <authorList>
            <person name="Hjerde E."/>
            <person name="Lorentzen M.S."/>
            <person name="Holden M.T."/>
            <person name="Seeger K."/>
            <person name="Paulsen S."/>
            <person name="Bason N."/>
            <person name="Churcher C."/>
            <person name="Harris D."/>
            <person name="Norbertczak H."/>
            <person name="Quail M.A."/>
            <person name="Sanders S."/>
            <person name="Thurston S."/>
            <person name="Parkhill J."/>
            <person name="Willassen N.P."/>
            <person name="Thomson N.R."/>
        </authorList>
    </citation>
    <scope>NUCLEOTIDE SEQUENCE [LARGE SCALE GENOMIC DNA]</scope>
    <source>
        <strain>LFI1238</strain>
    </source>
</reference>